<comment type="function">
    <text evidence="1">Catalyzes the attachment of glutamate to tRNA(Glu) in a two-step reaction: glutamate is first activated by ATP to form Glu-AMP and then transferred to the acceptor end of tRNA(Glu).</text>
</comment>
<comment type="catalytic activity">
    <reaction evidence="1">
        <text>tRNA(Glu) + L-glutamate + ATP = L-glutamyl-tRNA(Glu) + AMP + diphosphate</text>
        <dbReference type="Rhea" id="RHEA:23540"/>
        <dbReference type="Rhea" id="RHEA-COMP:9663"/>
        <dbReference type="Rhea" id="RHEA-COMP:9680"/>
        <dbReference type="ChEBI" id="CHEBI:29985"/>
        <dbReference type="ChEBI" id="CHEBI:30616"/>
        <dbReference type="ChEBI" id="CHEBI:33019"/>
        <dbReference type="ChEBI" id="CHEBI:78442"/>
        <dbReference type="ChEBI" id="CHEBI:78520"/>
        <dbReference type="ChEBI" id="CHEBI:456215"/>
        <dbReference type="EC" id="6.1.1.17"/>
    </reaction>
</comment>
<comment type="subunit">
    <text evidence="1">Monomer.</text>
</comment>
<comment type="subcellular location">
    <subcellularLocation>
        <location evidence="1">Cytoplasm</location>
    </subcellularLocation>
</comment>
<comment type="similarity">
    <text evidence="1">Belongs to the class-I aminoacyl-tRNA synthetase family. Glutamate--tRNA ligase type 1 subfamily.</text>
</comment>
<reference key="1">
    <citation type="journal article" date="2005" name="Genome Res.">
        <title>Comparative and functional genomic analyses of the pathogenicity of phytopathogen Xanthomonas campestris pv. campestris.</title>
        <authorList>
            <person name="Qian W."/>
            <person name="Jia Y."/>
            <person name="Ren S.-X."/>
            <person name="He Y.-Q."/>
            <person name="Feng J.-X."/>
            <person name="Lu L.-F."/>
            <person name="Sun Q."/>
            <person name="Ying G."/>
            <person name="Tang D.-J."/>
            <person name="Tang H."/>
            <person name="Wu W."/>
            <person name="Hao P."/>
            <person name="Wang L."/>
            <person name="Jiang B.-L."/>
            <person name="Zeng S."/>
            <person name="Gu W.-Y."/>
            <person name="Lu G."/>
            <person name="Rong L."/>
            <person name="Tian Y."/>
            <person name="Yao Z."/>
            <person name="Fu G."/>
            <person name="Chen B."/>
            <person name="Fang R."/>
            <person name="Qiang B."/>
            <person name="Chen Z."/>
            <person name="Zhao G.-P."/>
            <person name="Tang J.-L."/>
            <person name="He C."/>
        </authorList>
    </citation>
    <scope>NUCLEOTIDE SEQUENCE [LARGE SCALE GENOMIC DNA]</scope>
    <source>
        <strain>8004</strain>
    </source>
</reference>
<name>SYE_XANC8</name>
<dbReference type="EC" id="6.1.1.17" evidence="1"/>
<dbReference type="EMBL" id="CP000050">
    <property type="protein sequence ID" value="AAY48497.1"/>
    <property type="molecule type" value="Genomic_DNA"/>
</dbReference>
<dbReference type="RefSeq" id="WP_011037816.1">
    <property type="nucleotide sequence ID" value="NZ_CP155948.1"/>
</dbReference>
<dbReference type="SMR" id="Q4UWS6"/>
<dbReference type="KEGG" id="xcb:XC_1429"/>
<dbReference type="HOGENOM" id="CLU_015768_6_3_6"/>
<dbReference type="Proteomes" id="UP000000420">
    <property type="component" value="Chromosome"/>
</dbReference>
<dbReference type="GO" id="GO:0005829">
    <property type="term" value="C:cytosol"/>
    <property type="evidence" value="ECO:0007669"/>
    <property type="project" value="TreeGrafter"/>
</dbReference>
<dbReference type="GO" id="GO:0005524">
    <property type="term" value="F:ATP binding"/>
    <property type="evidence" value="ECO:0007669"/>
    <property type="project" value="UniProtKB-UniRule"/>
</dbReference>
<dbReference type="GO" id="GO:0004818">
    <property type="term" value="F:glutamate-tRNA ligase activity"/>
    <property type="evidence" value="ECO:0007669"/>
    <property type="project" value="UniProtKB-UniRule"/>
</dbReference>
<dbReference type="GO" id="GO:0000049">
    <property type="term" value="F:tRNA binding"/>
    <property type="evidence" value="ECO:0007669"/>
    <property type="project" value="InterPro"/>
</dbReference>
<dbReference type="GO" id="GO:0008270">
    <property type="term" value="F:zinc ion binding"/>
    <property type="evidence" value="ECO:0007669"/>
    <property type="project" value="InterPro"/>
</dbReference>
<dbReference type="GO" id="GO:0006424">
    <property type="term" value="P:glutamyl-tRNA aminoacylation"/>
    <property type="evidence" value="ECO:0007669"/>
    <property type="project" value="UniProtKB-UniRule"/>
</dbReference>
<dbReference type="CDD" id="cd00808">
    <property type="entry name" value="GluRS_core"/>
    <property type="match status" value="1"/>
</dbReference>
<dbReference type="FunFam" id="3.40.50.620:FF:000007">
    <property type="entry name" value="Glutamate--tRNA ligase"/>
    <property type="match status" value="1"/>
</dbReference>
<dbReference type="Gene3D" id="1.10.10.350">
    <property type="match status" value="1"/>
</dbReference>
<dbReference type="Gene3D" id="3.40.50.620">
    <property type="entry name" value="HUPs"/>
    <property type="match status" value="1"/>
</dbReference>
<dbReference type="HAMAP" id="MF_00022">
    <property type="entry name" value="Glu_tRNA_synth_type1"/>
    <property type="match status" value="1"/>
</dbReference>
<dbReference type="InterPro" id="IPR045462">
    <property type="entry name" value="aa-tRNA-synth_I_cd-bd"/>
</dbReference>
<dbReference type="InterPro" id="IPR020751">
    <property type="entry name" value="aa-tRNA-synth_I_codon-bd_sub2"/>
</dbReference>
<dbReference type="InterPro" id="IPR001412">
    <property type="entry name" value="aa-tRNA-synth_I_CS"/>
</dbReference>
<dbReference type="InterPro" id="IPR008925">
    <property type="entry name" value="aa_tRNA-synth_I_cd-bd_sf"/>
</dbReference>
<dbReference type="InterPro" id="IPR004527">
    <property type="entry name" value="Glu-tRNA-ligase_bac/mito"/>
</dbReference>
<dbReference type="InterPro" id="IPR000924">
    <property type="entry name" value="Glu/Gln-tRNA-synth"/>
</dbReference>
<dbReference type="InterPro" id="IPR020058">
    <property type="entry name" value="Glu/Gln-tRNA-synth_Ib_cat-dom"/>
</dbReference>
<dbReference type="InterPro" id="IPR049940">
    <property type="entry name" value="GluQ/Sye"/>
</dbReference>
<dbReference type="InterPro" id="IPR033910">
    <property type="entry name" value="GluRS_core"/>
</dbReference>
<dbReference type="InterPro" id="IPR014729">
    <property type="entry name" value="Rossmann-like_a/b/a_fold"/>
</dbReference>
<dbReference type="NCBIfam" id="TIGR00464">
    <property type="entry name" value="gltX_bact"/>
    <property type="match status" value="1"/>
</dbReference>
<dbReference type="PANTHER" id="PTHR43311">
    <property type="entry name" value="GLUTAMATE--TRNA LIGASE"/>
    <property type="match status" value="1"/>
</dbReference>
<dbReference type="PANTHER" id="PTHR43311:SF2">
    <property type="entry name" value="GLUTAMATE--TRNA LIGASE, MITOCHONDRIAL-RELATED"/>
    <property type="match status" value="1"/>
</dbReference>
<dbReference type="Pfam" id="PF19269">
    <property type="entry name" value="Anticodon_2"/>
    <property type="match status" value="1"/>
</dbReference>
<dbReference type="Pfam" id="PF00749">
    <property type="entry name" value="tRNA-synt_1c"/>
    <property type="match status" value="1"/>
</dbReference>
<dbReference type="PRINTS" id="PR00987">
    <property type="entry name" value="TRNASYNTHGLU"/>
</dbReference>
<dbReference type="SUPFAM" id="SSF48163">
    <property type="entry name" value="An anticodon-binding domain of class I aminoacyl-tRNA synthetases"/>
    <property type="match status" value="1"/>
</dbReference>
<dbReference type="SUPFAM" id="SSF52374">
    <property type="entry name" value="Nucleotidylyl transferase"/>
    <property type="match status" value="1"/>
</dbReference>
<dbReference type="PROSITE" id="PS00178">
    <property type="entry name" value="AA_TRNA_LIGASE_I"/>
    <property type="match status" value="1"/>
</dbReference>
<sequence>MTCRTRFAPSPTGYLHIGGARTALYCWLEARHRGGQFVLRIEDTDRERSTQVAIDAILEAMEWLGLGYDEGPIYQTQRIARYQEVAEQLLAQGKAYYAYETREELDAMREAAMAKQEKPRYNGAAREQQLPYRDDPNRVIRFKNPLAGTVVFDDLIKGRIEIANSELDDMVIFRPDGYPTYNFAVVVDDWDMGITEVIRGDDHINNTPRQINIYEALGAPVPKFAHMPMILDEQGAKLSKRTGAADVMQYKDAGYLPHALINYLARLGWSHGDQELFSQQELLDLFDVKDVNSKAARLDMAKLGWVNQHYLKTDDPASIAPQLEYQLRKLGIDVAAGPAAADVVVALRERVQTLKEMAEKAVVWYQPLETYDEAAVIKHLKLGAEVPLGKAREMLAALNEWSVENVSAALHAAAAALELGMGKVAQPLRVAITGTQVSPDISQTVYLAGREGALKRIDAALIKIGAA</sequence>
<proteinExistence type="inferred from homology"/>
<evidence type="ECO:0000255" key="1">
    <source>
        <dbReference type="HAMAP-Rule" id="MF_00022"/>
    </source>
</evidence>
<organism>
    <name type="scientific">Xanthomonas campestris pv. campestris (strain 8004)</name>
    <dbReference type="NCBI Taxonomy" id="314565"/>
    <lineage>
        <taxon>Bacteria</taxon>
        <taxon>Pseudomonadati</taxon>
        <taxon>Pseudomonadota</taxon>
        <taxon>Gammaproteobacteria</taxon>
        <taxon>Lysobacterales</taxon>
        <taxon>Lysobacteraceae</taxon>
        <taxon>Xanthomonas</taxon>
    </lineage>
</organism>
<protein>
    <recommendedName>
        <fullName evidence="1">Glutamate--tRNA ligase</fullName>
        <ecNumber evidence="1">6.1.1.17</ecNumber>
    </recommendedName>
    <alternativeName>
        <fullName evidence="1">Glutamyl-tRNA synthetase</fullName>
        <shortName evidence="1">GluRS</shortName>
    </alternativeName>
</protein>
<feature type="chain" id="PRO_0000237419" description="Glutamate--tRNA ligase">
    <location>
        <begin position="1"/>
        <end position="467"/>
    </location>
</feature>
<feature type="short sequence motif" description="'HIGH' region" evidence="1">
    <location>
        <begin position="9"/>
        <end position="19"/>
    </location>
</feature>
<feature type="short sequence motif" description="'KMSKS' region" evidence="1">
    <location>
        <begin position="237"/>
        <end position="241"/>
    </location>
</feature>
<feature type="binding site" evidence="1">
    <location>
        <position position="240"/>
    </location>
    <ligand>
        <name>ATP</name>
        <dbReference type="ChEBI" id="CHEBI:30616"/>
    </ligand>
</feature>
<accession>Q4UWS6</accession>
<keyword id="KW-0030">Aminoacyl-tRNA synthetase</keyword>
<keyword id="KW-0067">ATP-binding</keyword>
<keyword id="KW-0963">Cytoplasm</keyword>
<keyword id="KW-0436">Ligase</keyword>
<keyword id="KW-0547">Nucleotide-binding</keyword>
<keyword id="KW-0648">Protein biosynthesis</keyword>
<gene>
    <name evidence="1" type="primary">gltX</name>
    <name type="ordered locus">XC_1429</name>
</gene>